<keyword id="KW-0449">Lipoprotein</keyword>
<keyword id="KW-0479">Metal-binding</keyword>
<keyword id="KW-0488">Methylation</keyword>
<keyword id="KW-0636">Prenylation</keyword>
<keyword id="KW-1185">Reference proteome</keyword>
<protein>
    <recommendedName>
        <fullName evidence="4 5">Heavy metal-associated isoprenylated plant protein 19</fullName>
        <shortName evidence="4 5">AtHIP19</shortName>
    </recommendedName>
</protein>
<accession>A0JPW5</accession>
<accession>Q9LVF6</accession>
<evidence type="ECO:0000250" key="1">
    <source>
        <dbReference type="UniProtKB" id="Q9LZF1"/>
    </source>
</evidence>
<evidence type="ECO:0000250" key="2">
    <source>
        <dbReference type="UniProtKB" id="Q9SZN7"/>
    </source>
</evidence>
<evidence type="ECO:0000255" key="3">
    <source>
        <dbReference type="PROSITE-ProRule" id="PRU00280"/>
    </source>
</evidence>
<evidence type="ECO:0000303" key="4">
    <source>
    </source>
</evidence>
<evidence type="ECO:0000303" key="5">
    <source>
    </source>
</evidence>
<evidence type="ECO:0000305" key="6"/>
<evidence type="ECO:0000312" key="7">
    <source>
        <dbReference type="Araport" id="AT3G21490"/>
    </source>
</evidence>
<evidence type="ECO:0000312" key="8">
    <source>
        <dbReference type="EMBL" id="ABK32149.1"/>
    </source>
</evidence>
<evidence type="ECO:0000312" key="9">
    <source>
        <dbReference type="EMBL" id="BAB02344.1"/>
    </source>
</evidence>
<dbReference type="EMBL" id="AB019232">
    <property type="protein sequence ID" value="BAB02344.1"/>
    <property type="status" value="ALT_SEQ"/>
    <property type="molecule type" value="Genomic_DNA"/>
</dbReference>
<dbReference type="EMBL" id="CP002686">
    <property type="protein sequence ID" value="AEE76515.1"/>
    <property type="molecule type" value="Genomic_DNA"/>
</dbReference>
<dbReference type="EMBL" id="BT029335">
    <property type="protein sequence ID" value="ABK32149.1"/>
    <property type="molecule type" value="mRNA"/>
</dbReference>
<dbReference type="RefSeq" id="NP_188786.1">
    <property type="nucleotide sequence ID" value="NM_113044.1"/>
</dbReference>
<dbReference type="SMR" id="A0JPW5"/>
<dbReference type="FunCoup" id="A0JPW5">
    <property type="interactions" value="47"/>
</dbReference>
<dbReference type="IntAct" id="A0JPW5">
    <property type="interactions" value="5"/>
</dbReference>
<dbReference type="PaxDb" id="3702-AT3G21490.1"/>
<dbReference type="EnsemblPlants" id="AT3G21490.1">
    <property type="protein sequence ID" value="AT3G21490.1"/>
    <property type="gene ID" value="AT3G21490"/>
</dbReference>
<dbReference type="GeneID" id="821703"/>
<dbReference type="Gramene" id="AT3G21490.1">
    <property type="protein sequence ID" value="AT3G21490.1"/>
    <property type="gene ID" value="AT3G21490"/>
</dbReference>
<dbReference type="KEGG" id="ath:AT3G21490"/>
<dbReference type="Araport" id="AT3G21490"/>
<dbReference type="TAIR" id="AT3G21490"/>
<dbReference type="eggNOG" id="KOG1603">
    <property type="taxonomic scope" value="Eukaryota"/>
</dbReference>
<dbReference type="HOGENOM" id="CLU_100095_2_0_1"/>
<dbReference type="InParanoid" id="A0JPW5"/>
<dbReference type="OMA" id="MNCNACE"/>
<dbReference type="OrthoDB" id="1927097at2759"/>
<dbReference type="PRO" id="PR:A0JPW5"/>
<dbReference type="Proteomes" id="UP000006548">
    <property type="component" value="Chromosome 3"/>
</dbReference>
<dbReference type="ExpressionAtlas" id="A0JPW5">
    <property type="expression patterns" value="baseline and differential"/>
</dbReference>
<dbReference type="GO" id="GO:0046872">
    <property type="term" value="F:metal ion binding"/>
    <property type="evidence" value="ECO:0007669"/>
    <property type="project" value="UniProtKB-KW"/>
</dbReference>
<dbReference type="CDD" id="cd00371">
    <property type="entry name" value="HMA"/>
    <property type="match status" value="1"/>
</dbReference>
<dbReference type="Gene3D" id="3.30.70.100">
    <property type="match status" value="1"/>
</dbReference>
<dbReference type="InterPro" id="IPR044577">
    <property type="entry name" value="HIPP4/7/8/17/18/19"/>
</dbReference>
<dbReference type="InterPro" id="IPR006121">
    <property type="entry name" value="HMA_dom"/>
</dbReference>
<dbReference type="InterPro" id="IPR036163">
    <property type="entry name" value="HMA_dom_sf"/>
</dbReference>
<dbReference type="PANTHER" id="PTHR46195:SF30">
    <property type="entry name" value="HEAVY METAL-ASSOCIATED ISOPRENYLATED PLANT PROTEIN 17-RELATED"/>
    <property type="match status" value="1"/>
</dbReference>
<dbReference type="PANTHER" id="PTHR46195">
    <property type="entry name" value="HEAVY METAL-ASSOCIATED ISOPRENYLATED PLANT PROTEIN 7"/>
    <property type="match status" value="1"/>
</dbReference>
<dbReference type="Pfam" id="PF00403">
    <property type="entry name" value="HMA"/>
    <property type="match status" value="1"/>
</dbReference>
<dbReference type="SUPFAM" id="SSF55008">
    <property type="entry name" value="HMA, heavy metal-associated domain"/>
    <property type="match status" value="1"/>
</dbReference>
<dbReference type="PROSITE" id="PS50846">
    <property type="entry name" value="HMA_2"/>
    <property type="match status" value="1"/>
</dbReference>
<sequence>MTKDKKKKDNVRYMDVEFNVSMHCNDCERKIARVISKFKGVETFVTDMINHKVVVRGKIDPNKLLKKLKKKTGKRVKIVVKEEKGEESSKENENVLEIDMESICLGDQSMFGFCDWEMEKFMVFSDENVKAICSIS</sequence>
<proteinExistence type="evidence at transcript level"/>
<reference key="1">
    <citation type="journal article" date="2000" name="DNA Res.">
        <title>Structural analysis of Arabidopsis thaliana chromosome 3. I. Sequence features of the regions of 4,504,864 bp covered by sixty P1 and TAC clones.</title>
        <authorList>
            <person name="Sato S."/>
            <person name="Nakamura Y."/>
            <person name="Kaneko T."/>
            <person name="Katoh T."/>
            <person name="Asamizu E."/>
            <person name="Tabata S."/>
        </authorList>
    </citation>
    <scope>NUCLEOTIDE SEQUENCE [LARGE SCALE GENOMIC DNA]</scope>
    <source>
        <strain>cv. Columbia</strain>
    </source>
</reference>
<reference key="2">
    <citation type="journal article" date="2017" name="Plant J.">
        <title>Araport11: a complete reannotation of the Arabidopsis thaliana reference genome.</title>
        <authorList>
            <person name="Cheng C.Y."/>
            <person name="Krishnakumar V."/>
            <person name="Chan A.P."/>
            <person name="Thibaud-Nissen F."/>
            <person name="Schobel S."/>
            <person name="Town C.D."/>
        </authorList>
    </citation>
    <scope>GENOME REANNOTATION</scope>
    <source>
        <strain>cv. Columbia</strain>
    </source>
</reference>
<reference key="3">
    <citation type="submission" date="2006-11" db="EMBL/GenBank/DDBJ databases">
        <title>Arabidopsis ORF clones.</title>
        <authorList>
            <person name="Bautista V.R."/>
            <person name="Kim C.J."/>
            <person name="Chen H."/>
            <person name="Quinitio C."/>
            <person name="Ecker J.R."/>
        </authorList>
    </citation>
    <scope>NUCLEOTIDE SEQUENCE [LARGE SCALE MRNA]</scope>
    <source>
        <strain>cv. Columbia</strain>
    </source>
</reference>
<reference key="4">
    <citation type="journal article" date="2010" name="Metallomics">
        <title>Metallochaperone-like genes in Arabidopsis thaliana.</title>
        <authorList>
            <person name="Tehseen M."/>
            <person name="Cairns N."/>
            <person name="Sherson S."/>
            <person name="Cobbett C.S."/>
        </authorList>
    </citation>
    <scope>GENE FAMILY</scope>
    <scope>NOMENCLATURE</scope>
</reference>
<reference key="5">
    <citation type="journal article" date="2013" name="FEBS J.">
        <title>Heavy metal-associated isoprenylated plant protein (HIPP): characterization of a family of proteins exclusive to plants.</title>
        <authorList>
            <person name="de Abreu-Neto J.B."/>
            <person name="Turchetto-Zolet A.C."/>
            <person name="de Oliveira L.F."/>
            <person name="Zanettini M.H."/>
            <person name="Margis-Pinheiro M."/>
        </authorList>
    </citation>
    <scope>GENE FAMILY</scope>
    <scope>NOMENCLATURE</scope>
</reference>
<name>HIP19_ARATH</name>
<organism evidence="8">
    <name type="scientific">Arabidopsis thaliana</name>
    <name type="common">Mouse-ear cress</name>
    <dbReference type="NCBI Taxonomy" id="3702"/>
    <lineage>
        <taxon>Eukaryota</taxon>
        <taxon>Viridiplantae</taxon>
        <taxon>Streptophyta</taxon>
        <taxon>Embryophyta</taxon>
        <taxon>Tracheophyta</taxon>
        <taxon>Spermatophyta</taxon>
        <taxon>Magnoliopsida</taxon>
        <taxon>eudicotyledons</taxon>
        <taxon>Gunneridae</taxon>
        <taxon>Pentapetalae</taxon>
        <taxon>rosids</taxon>
        <taxon>malvids</taxon>
        <taxon>Brassicales</taxon>
        <taxon>Brassicaceae</taxon>
        <taxon>Camelineae</taxon>
        <taxon>Arabidopsis</taxon>
    </lineage>
</organism>
<gene>
    <name evidence="4 5" type="primary">HIPP19</name>
    <name evidence="7" type="ordered locus">At3g21490</name>
    <name evidence="9" type="ORF">MIL23.6</name>
</gene>
<comment type="function">
    <text evidence="1">Heavy-metal-binding protein.</text>
</comment>
<comment type="similarity">
    <text evidence="6">Belongs to the HIPP family.</text>
</comment>
<comment type="sequence caution" evidence="6">
    <conflict type="erroneous gene model prediction">
        <sequence resource="EMBL-CDS" id="BAB02344"/>
    </conflict>
</comment>
<feature type="chain" id="PRO_0000437827" description="Heavy metal-associated isoprenylated plant protein 19">
    <location>
        <begin position="1"/>
        <end position="133"/>
    </location>
</feature>
<feature type="propeptide" id="PRO_0000437828" description="Removed in mature form" evidence="6">
    <location>
        <begin position="134"/>
        <end position="136"/>
    </location>
</feature>
<feature type="domain" description="HMA" evidence="3">
    <location>
        <begin position="13"/>
        <end position="77"/>
    </location>
</feature>
<feature type="binding site" evidence="3">
    <location>
        <position position="24"/>
    </location>
    <ligand>
        <name>a metal cation</name>
        <dbReference type="ChEBI" id="CHEBI:25213"/>
    </ligand>
</feature>
<feature type="binding site" evidence="3">
    <location>
        <position position="27"/>
    </location>
    <ligand>
        <name>a metal cation</name>
        <dbReference type="ChEBI" id="CHEBI:25213"/>
    </ligand>
</feature>
<feature type="modified residue" description="Cysteine methyl ester" evidence="2">
    <location>
        <position position="133"/>
    </location>
</feature>
<feature type="lipid moiety-binding region" description="S-farnesyl cysteine" evidence="2">
    <location>
        <position position="133"/>
    </location>
</feature>